<gene>
    <name evidence="1" type="primary">pnp</name>
    <name type="ordered locus">JTY_2795</name>
</gene>
<organism>
    <name type="scientific">Mycobacterium bovis (strain BCG / Tokyo 172 / ATCC 35737 / TMC 1019)</name>
    <dbReference type="NCBI Taxonomy" id="561275"/>
    <lineage>
        <taxon>Bacteria</taxon>
        <taxon>Bacillati</taxon>
        <taxon>Actinomycetota</taxon>
        <taxon>Actinomycetes</taxon>
        <taxon>Mycobacteriales</taxon>
        <taxon>Mycobacteriaceae</taxon>
        <taxon>Mycobacterium</taxon>
        <taxon>Mycobacterium tuberculosis complex</taxon>
    </lineage>
</organism>
<sequence>MSAAEIDEGVFETTATIDNGSFGTRTIRFETGRLALQAAGAVVAYLDDDNMLLSATTASKNPKEHFDFFPLTVDVEERMYAAGRIPGSFFRREGRPSTDAILTCRLIDRPLRPSFVDGLRNEIQIVVTILSLDPGDLYDVLAINAASASTQLGGLPFSGPIGGVRVALIDGTWVGFPTVDQIERAVFDMVVAGRIVEGDVAIMMVEAEATENVVELVEGGAQAPTESVVAAGLEAAKPFIAALCTAQQELADAAGKSGKPTVDFPVFPDYGEDVYYSVSSVATDELAAALTIGGKAERDQRIDEIKTQVVQRLADTYEGREKEVGAALRALTKKLVRQRILTDHFRIDGRGITDIRALSAEVAVVPRAHGSALFERGETQILGVTTLDMIKMAQQIDSLGPETSKRYMHHYNFPPFSTGETGRVGSPKRREIGHGALAERALVPVLPSVEEFPYAIRQVSEALGSNGSTSMGSVCASTLALLNAGVPLKAPVAGIAMGLVSDDIQVEGAVDGVVERRFVTLTDILGAEDAFGDMDFKVAGTKDFVTALQLDTKLDGIPSQVLAGALEQAKDARLTILEVMAEAIDRPDEMSPYAPRVTTIKVPVDKIGEVIGPKGKVINAITEETGAQISIEDDGTVFVGATDGPSAQAAIDKINAIANPQLPTVGERFLGTVVKTTDFGAFVSLLPGRDGLVHISKLGKGKRIAKVEDVVNVGDKLRVEIADIDKRGKISLILVADEDSTAAATDAATVTS</sequence>
<accession>C1AFP7</accession>
<reference key="1">
    <citation type="journal article" date="2009" name="Vaccine">
        <title>Whole genome sequence analysis of Mycobacterium bovis bacillus Calmette-Guerin (BCG) Tokyo 172: a comparative study of BCG vaccine substrains.</title>
        <authorList>
            <person name="Seki M."/>
            <person name="Honda I."/>
            <person name="Fujita I."/>
            <person name="Yano I."/>
            <person name="Yamamoto S."/>
            <person name="Koyama A."/>
        </authorList>
    </citation>
    <scope>NUCLEOTIDE SEQUENCE [LARGE SCALE GENOMIC DNA]</scope>
    <source>
        <strain>BCG / Tokyo 172 / ATCC 35737 / TMC 1019</strain>
    </source>
</reference>
<dbReference type="EC" id="2.7.7.8" evidence="1"/>
<dbReference type="EMBL" id="AP010918">
    <property type="protein sequence ID" value="BAH27076.1"/>
    <property type="molecule type" value="Genomic_DNA"/>
</dbReference>
<dbReference type="RefSeq" id="WP_003414124.1">
    <property type="nucleotide sequence ID" value="NZ_CP014566.1"/>
</dbReference>
<dbReference type="SMR" id="C1AFP7"/>
<dbReference type="KEGG" id="mbt:JTY_2795"/>
<dbReference type="HOGENOM" id="CLU_004217_2_2_11"/>
<dbReference type="GO" id="GO:0005829">
    <property type="term" value="C:cytosol"/>
    <property type="evidence" value="ECO:0007669"/>
    <property type="project" value="TreeGrafter"/>
</dbReference>
<dbReference type="GO" id="GO:0000175">
    <property type="term" value="F:3'-5'-RNA exonuclease activity"/>
    <property type="evidence" value="ECO:0007669"/>
    <property type="project" value="TreeGrafter"/>
</dbReference>
<dbReference type="GO" id="GO:0000287">
    <property type="term" value="F:magnesium ion binding"/>
    <property type="evidence" value="ECO:0007669"/>
    <property type="project" value="UniProtKB-UniRule"/>
</dbReference>
<dbReference type="GO" id="GO:0004654">
    <property type="term" value="F:polyribonucleotide nucleotidyltransferase activity"/>
    <property type="evidence" value="ECO:0007669"/>
    <property type="project" value="UniProtKB-UniRule"/>
</dbReference>
<dbReference type="GO" id="GO:0003723">
    <property type="term" value="F:RNA binding"/>
    <property type="evidence" value="ECO:0007669"/>
    <property type="project" value="UniProtKB-UniRule"/>
</dbReference>
<dbReference type="GO" id="GO:0006402">
    <property type="term" value="P:mRNA catabolic process"/>
    <property type="evidence" value="ECO:0007669"/>
    <property type="project" value="UniProtKB-UniRule"/>
</dbReference>
<dbReference type="GO" id="GO:0006396">
    <property type="term" value="P:RNA processing"/>
    <property type="evidence" value="ECO:0007669"/>
    <property type="project" value="InterPro"/>
</dbReference>
<dbReference type="CDD" id="cd02393">
    <property type="entry name" value="KH-I_PNPase"/>
    <property type="match status" value="1"/>
</dbReference>
<dbReference type="CDD" id="cd11364">
    <property type="entry name" value="RNase_PH_PNPase_2"/>
    <property type="match status" value="1"/>
</dbReference>
<dbReference type="CDD" id="cd04472">
    <property type="entry name" value="S1_PNPase"/>
    <property type="match status" value="1"/>
</dbReference>
<dbReference type="FunFam" id="2.40.50.140:FF:000069">
    <property type="entry name" value="Polyribonucleotide nucleotidyltransferase"/>
    <property type="match status" value="1"/>
</dbReference>
<dbReference type="FunFam" id="3.30.1370.10:FF:000001">
    <property type="entry name" value="Polyribonucleotide nucleotidyltransferase"/>
    <property type="match status" value="1"/>
</dbReference>
<dbReference type="FunFam" id="3.30.230.70:FF:000001">
    <property type="entry name" value="Polyribonucleotide nucleotidyltransferase"/>
    <property type="match status" value="1"/>
</dbReference>
<dbReference type="FunFam" id="3.30.230.70:FF:000002">
    <property type="entry name" value="Polyribonucleotide nucleotidyltransferase"/>
    <property type="match status" value="1"/>
</dbReference>
<dbReference type="Gene3D" id="3.30.230.70">
    <property type="entry name" value="GHMP Kinase, N-terminal domain"/>
    <property type="match status" value="2"/>
</dbReference>
<dbReference type="Gene3D" id="3.30.1370.10">
    <property type="entry name" value="K Homology domain, type 1"/>
    <property type="match status" value="1"/>
</dbReference>
<dbReference type="Gene3D" id="2.40.50.140">
    <property type="entry name" value="Nucleic acid-binding proteins"/>
    <property type="match status" value="1"/>
</dbReference>
<dbReference type="HAMAP" id="MF_01595">
    <property type="entry name" value="PNPase"/>
    <property type="match status" value="1"/>
</dbReference>
<dbReference type="InterPro" id="IPR001247">
    <property type="entry name" value="ExoRNase_PH_dom1"/>
</dbReference>
<dbReference type="InterPro" id="IPR036345">
    <property type="entry name" value="ExoRNase_PH_dom2_sf"/>
</dbReference>
<dbReference type="InterPro" id="IPR014069">
    <property type="entry name" value="GPSI/PNP"/>
</dbReference>
<dbReference type="InterPro" id="IPR004087">
    <property type="entry name" value="KH_dom"/>
</dbReference>
<dbReference type="InterPro" id="IPR004088">
    <property type="entry name" value="KH_dom_type_1"/>
</dbReference>
<dbReference type="InterPro" id="IPR036612">
    <property type="entry name" value="KH_dom_type_1_sf"/>
</dbReference>
<dbReference type="InterPro" id="IPR012340">
    <property type="entry name" value="NA-bd_OB-fold"/>
</dbReference>
<dbReference type="InterPro" id="IPR012162">
    <property type="entry name" value="PNPase"/>
</dbReference>
<dbReference type="InterPro" id="IPR027408">
    <property type="entry name" value="PNPase/RNase_PH_dom_sf"/>
</dbReference>
<dbReference type="InterPro" id="IPR015848">
    <property type="entry name" value="PNPase_PH_RNA-bd_bac/org-type"/>
</dbReference>
<dbReference type="InterPro" id="IPR036456">
    <property type="entry name" value="PNPase_PH_RNA-bd_sf"/>
</dbReference>
<dbReference type="InterPro" id="IPR020568">
    <property type="entry name" value="Ribosomal_Su5_D2-typ_SF"/>
</dbReference>
<dbReference type="InterPro" id="IPR003029">
    <property type="entry name" value="S1_domain"/>
</dbReference>
<dbReference type="NCBIfam" id="TIGR03591">
    <property type="entry name" value="polynuc_phos"/>
    <property type="match status" value="1"/>
</dbReference>
<dbReference type="NCBIfam" id="TIGR02696">
    <property type="entry name" value="pppGpp_PNP"/>
    <property type="match status" value="1"/>
</dbReference>
<dbReference type="NCBIfam" id="NF008805">
    <property type="entry name" value="PRK11824.1"/>
    <property type="match status" value="1"/>
</dbReference>
<dbReference type="PANTHER" id="PTHR11252">
    <property type="entry name" value="POLYRIBONUCLEOTIDE NUCLEOTIDYLTRANSFERASE"/>
    <property type="match status" value="1"/>
</dbReference>
<dbReference type="PANTHER" id="PTHR11252:SF0">
    <property type="entry name" value="POLYRIBONUCLEOTIDE NUCLEOTIDYLTRANSFERASE 1, MITOCHONDRIAL"/>
    <property type="match status" value="1"/>
</dbReference>
<dbReference type="Pfam" id="PF00013">
    <property type="entry name" value="KH_1"/>
    <property type="match status" value="1"/>
</dbReference>
<dbReference type="Pfam" id="PF03726">
    <property type="entry name" value="PNPase"/>
    <property type="match status" value="1"/>
</dbReference>
<dbReference type="Pfam" id="PF01138">
    <property type="entry name" value="RNase_PH"/>
    <property type="match status" value="2"/>
</dbReference>
<dbReference type="Pfam" id="PF00575">
    <property type="entry name" value="S1"/>
    <property type="match status" value="1"/>
</dbReference>
<dbReference type="PIRSF" id="PIRSF005499">
    <property type="entry name" value="PNPase"/>
    <property type="match status" value="1"/>
</dbReference>
<dbReference type="SMART" id="SM00322">
    <property type="entry name" value="KH"/>
    <property type="match status" value="1"/>
</dbReference>
<dbReference type="SMART" id="SM00316">
    <property type="entry name" value="S1"/>
    <property type="match status" value="1"/>
</dbReference>
<dbReference type="SUPFAM" id="SSF54791">
    <property type="entry name" value="Eukaryotic type KH-domain (KH-domain type I)"/>
    <property type="match status" value="1"/>
</dbReference>
<dbReference type="SUPFAM" id="SSF50249">
    <property type="entry name" value="Nucleic acid-binding proteins"/>
    <property type="match status" value="1"/>
</dbReference>
<dbReference type="SUPFAM" id="SSF46915">
    <property type="entry name" value="Polynucleotide phosphorylase/guanosine pentaphosphate synthase (PNPase/GPSI), domain 3"/>
    <property type="match status" value="1"/>
</dbReference>
<dbReference type="SUPFAM" id="SSF55666">
    <property type="entry name" value="Ribonuclease PH domain 2-like"/>
    <property type="match status" value="2"/>
</dbReference>
<dbReference type="SUPFAM" id="SSF54211">
    <property type="entry name" value="Ribosomal protein S5 domain 2-like"/>
    <property type="match status" value="2"/>
</dbReference>
<dbReference type="PROSITE" id="PS50084">
    <property type="entry name" value="KH_TYPE_1"/>
    <property type="match status" value="1"/>
</dbReference>
<dbReference type="PROSITE" id="PS50126">
    <property type="entry name" value="S1"/>
    <property type="match status" value="1"/>
</dbReference>
<feature type="chain" id="PRO_1000185746" description="Polyribonucleotide nucleotidyltransferase">
    <location>
        <begin position="1"/>
        <end position="752"/>
    </location>
</feature>
<feature type="domain" description="KH" evidence="1">
    <location>
        <begin position="595"/>
        <end position="654"/>
    </location>
</feature>
<feature type="domain" description="S1 motif" evidence="1">
    <location>
        <begin position="666"/>
        <end position="735"/>
    </location>
</feature>
<feature type="binding site" evidence="1">
    <location>
        <position position="529"/>
    </location>
    <ligand>
        <name>Mg(2+)</name>
        <dbReference type="ChEBI" id="CHEBI:18420"/>
    </ligand>
</feature>
<feature type="binding site" evidence="1">
    <location>
        <position position="535"/>
    </location>
    <ligand>
        <name>Mg(2+)</name>
        <dbReference type="ChEBI" id="CHEBI:18420"/>
    </ligand>
</feature>
<name>PNP_MYCBT</name>
<comment type="function">
    <text evidence="1">Involved in mRNA degradation. Catalyzes the phosphorolysis of single-stranded polyribonucleotides processively in the 3'- to 5'-direction.</text>
</comment>
<comment type="catalytic activity">
    <reaction evidence="1">
        <text>RNA(n+1) + phosphate = RNA(n) + a ribonucleoside 5'-diphosphate</text>
        <dbReference type="Rhea" id="RHEA:22096"/>
        <dbReference type="Rhea" id="RHEA-COMP:14527"/>
        <dbReference type="Rhea" id="RHEA-COMP:17342"/>
        <dbReference type="ChEBI" id="CHEBI:43474"/>
        <dbReference type="ChEBI" id="CHEBI:57930"/>
        <dbReference type="ChEBI" id="CHEBI:140395"/>
        <dbReference type="EC" id="2.7.7.8"/>
    </reaction>
</comment>
<comment type="cofactor">
    <cofactor evidence="1">
        <name>Mg(2+)</name>
        <dbReference type="ChEBI" id="CHEBI:18420"/>
    </cofactor>
</comment>
<comment type="subcellular location">
    <subcellularLocation>
        <location evidence="1">Cytoplasm</location>
    </subcellularLocation>
</comment>
<comment type="similarity">
    <text evidence="1">Belongs to the polyribonucleotide nucleotidyltransferase family.</text>
</comment>
<evidence type="ECO:0000255" key="1">
    <source>
        <dbReference type="HAMAP-Rule" id="MF_01595"/>
    </source>
</evidence>
<proteinExistence type="inferred from homology"/>
<protein>
    <recommendedName>
        <fullName evidence="1">Polyribonucleotide nucleotidyltransferase</fullName>
        <ecNumber evidence="1">2.7.7.8</ecNumber>
    </recommendedName>
    <alternativeName>
        <fullName evidence="1">Polynucleotide phosphorylase</fullName>
        <shortName evidence="1">PNPase</shortName>
    </alternativeName>
</protein>
<keyword id="KW-0963">Cytoplasm</keyword>
<keyword id="KW-0460">Magnesium</keyword>
<keyword id="KW-0479">Metal-binding</keyword>
<keyword id="KW-0548">Nucleotidyltransferase</keyword>
<keyword id="KW-0694">RNA-binding</keyword>
<keyword id="KW-0808">Transferase</keyword>